<comment type="function">
    <text evidence="1">Encapsidates the negative strand viral RNA, protecting it from nucleases. The encapsidated genomic RNA is termed the ribonucleoprotein (RNP) and serves as template for transcription and replication. The RNP needs to be localized in the host nucleus to start an infectious cycle, but is too large to diffuse through the nuclear pore complex. NP comprises at least 2 nuclear localization signals that are responsible for the active RNP import into the nucleus through cellular importin alpha/beta pathway. Later in the infection, nclear export of RNPs are mediated through viral proteins NEP interacting with M1 which binds nucleoproteins. It is possible that nucleoprotein binds directly host exportin-1/XPO1 and plays an active role in RNPs nuclear export. M1 interaction with RNP seems to hide nucleoprotein's nuclear localization signals. Soon after a virion infects a new cell, M1 dissociates from the RNP under acidification of the virion driven by M2 protein. Dissociation of M1 from RNP unmasks nucleoprotein's nuclear localization signals, targeting the RNP to the nucleus.</text>
</comment>
<comment type="subunit">
    <text evidence="1">Homomultimerizes to form the nucleocapsid. May bind host exportin-1/XPO1. Binds to viral genomic RNA. Protein-RNA contacts are mediated by a combination of electrostatic interactions between positively charged residues and the phosphate backbone and planar interactions between aromatic side chains and bases.</text>
</comment>
<comment type="subcellular location">
    <subcellularLocation>
        <location evidence="1">Virion</location>
    </subcellularLocation>
    <subcellularLocation>
        <location evidence="1">Host nucleus</location>
    </subcellularLocation>
</comment>
<comment type="PTM">
    <text evidence="1">Late in virus-infected cells, may be cleaved from a 56-kDa protein to a 53-kDa protein by a cellular caspase. This cleavage might be a marker for the onset of apoptosis in infected cells or have a specific function in virus host interaction.</text>
</comment>
<comment type="similarity">
    <text evidence="1">Belongs to the influenza viruses nucleoprotein family.</text>
</comment>
<accession>P69294</accession>
<accession>Q07539</accession>
<accession>Q08029</accession>
<proteinExistence type="inferred from homology"/>
<name>NCAP_I85A0</name>
<dbReference type="EMBL" id="L07364">
    <property type="protein sequence ID" value="AAA51511.1"/>
    <property type="molecule type" value="Genomic_RNA"/>
</dbReference>
<dbReference type="SMR" id="P69294"/>
<dbReference type="GO" id="GO:0019029">
    <property type="term" value="C:helical viral capsid"/>
    <property type="evidence" value="ECO:0007669"/>
    <property type="project" value="UniProtKB-UniRule"/>
</dbReference>
<dbReference type="GO" id="GO:0043657">
    <property type="term" value="C:host cell"/>
    <property type="evidence" value="ECO:0007669"/>
    <property type="project" value="GOC"/>
</dbReference>
<dbReference type="GO" id="GO:0042025">
    <property type="term" value="C:host cell nucleus"/>
    <property type="evidence" value="ECO:0007669"/>
    <property type="project" value="UniProtKB-SubCell"/>
</dbReference>
<dbReference type="GO" id="GO:1990904">
    <property type="term" value="C:ribonucleoprotein complex"/>
    <property type="evidence" value="ECO:0007669"/>
    <property type="project" value="UniProtKB-KW"/>
</dbReference>
<dbReference type="GO" id="GO:0019013">
    <property type="term" value="C:viral nucleocapsid"/>
    <property type="evidence" value="ECO:0007669"/>
    <property type="project" value="UniProtKB-UniRule"/>
</dbReference>
<dbReference type="GO" id="GO:0003723">
    <property type="term" value="F:RNA binding"/>
    <property type="evidence" value="ECO:0007669"/>
    <property type="project" value="UniProtKB-UniRule"/>
</dbReference>
<dbReference type="GO" id="GO:0005198">
    <property type="term" value="F:structural molecule activity"/>
    <property type="evidence" value="ECO:0007669"/>
    <property type="project" value="UniProtKB-UniRule"/>
</dbReference>
<dbReference type="GO" id="GO:0046718">
    <property type="term" value="P:symbiont entry into host cell"/>
    <property type="evidence" value="ECO:0007669"/>
    <property type="project" value="UniProtKB-KW"/>
</dbReference>
<dbReference type="GO" id="GO:0075732">
    <property type="term" value="P:viral penetration into host nucleus"/>
    <property type="evidence" value="ECO:0007669"/>
    <property type="project" value="UniProtKB-UniRule"/>
</dbReference>
<dbReference type="HAMAP" id="MF_04070">
    <property type="entry name" value="INFV_NCAP"/>
    <property type="match status" value="1"/>
</dbReference>
<dbReference type="InterPro" id="IPR002141">
    <property type="entry name" value="Flu_NP"/>
</dbReference>
<dbReference type="Pfam" id="PF00506">
    <property type="entry name" value="Flu_NP"/>
    <property type="match status" value="1"/>
</dbReference>
<dbReference type="SUPFAM" id="SSF161003">
    <property type="entry name" value="flu NP-like"/>
    <property type="match status" value="1"/>
</dbReference>
<evidence type="ECO:0000255" key="1">
    <source>
        <dbReference type="HAMAP-Rule" id="MF_04070"/>
    </source>
</evidence>
<evidence type="ECO:0000256" key="2">
    <source>
        <dbReference type="SAM" id="MobiDB-lite"/>
    </source>
</evidence>
<reference key="1">
    <citation type="journal article" date="1993" name="J. Virol.">
        <title>Analysis of the evolution and variation of the human influenza A virus nucleoprotein gene from 1933 to 1990.</title>
        <authorList>
            <person name="Shu L.L."/>
            <person name="Bean W.J."/>
            <person name="Webster R.G."/>
        </authorList>
    </citation>
    <scope>NUCLEOTIDE SEQUENCE [GENOMIC RNA]</scope>
</reference>
<protein>
    <recommendedName>
        <fullName evidence="1">Nucleoprotein</fullName>
    </recommendedName>
    <alternativeName>
        <fullName evidence="1">Nucleocapsid protein</fullName>
        <shortName evidence="1">Protein N</shortName>
    </alternativeName>
</protein>
<sequence>MASQGTKRSYEQMETDGERQNATEIRASVGKMIDGIGRFYIQMCTELKLSDYEGRLIQNSLTVERMVLSAFDERRNRYLEEHPSAGKDPKKTGGPIYKRVGGRWMRELVLYDKEEIRRIWRQANNGDDATRGLTHMMIWHSNLNDTTYQRTRALVRTGMDPRMCSLMQGSTLPRRSGAAGAAVKGIGTMVMELIRMIKRGINDRNFWRGENGRKTRSAYERMCNILKGKFQTAAQRAMMDQVRESRNPGNAEIEDLIFSARSALILRGSVAHKSCLPACVYGPAVSSGYDFEKEGYSLVGIDPFKLLQNSQVYSLIRPNENPAHKSQLVWMACHSAAFEDLRLLSFIRGTKVSPRGKLSTRGVQIASNENMDNMESSTLELRSRYWAIRTRSGGNTNQQRASAGQISVQPTFSVQRNLPFEKSTVMAAFTGNTEGRTSDMRAEIIRMMEGAKPEEVSFRGRGVFELSDEKATNPIVPSFDMSNEGSYFFGDNAEEYDN</sequence>
<feature type="chain" id="PRO_0000079076" description="Nucleoprotein">
    <location>
        <begin position="1"/>
        <end position="498"/>
    </location>
</feature>
<feature type="region of interest" description="Disordered" evidence="2">
    <location>
        <begin position="1"/>
        <end position="21"/>
    </location>
</feature>
<feature type="short sequence motif" description="Unconventional nuclear localization signal" evidence="1">
    <location>
        <begin position="1"/>
        <end position="18"/>
    </location>
</feature>
<feature type="short sequence motif" description="Bipartite nuclear localization signal" evidence="1">
    <location>
        <begin position="198"/>
        <end position="216"/>
    </location>
</feature>
<feature type="compositionally biased region" description="Basic and acidic residues" evidence="2">
    <location>
        <begin position="8"/>
        <end position="21"/>
    </location>
</feature>
<gene>
    <name evidence="1" type="primary">NP</name>
</gene>
<keyword id="KW-0167">Capsid protein</keyword>
<keyword id="KW-1139">Helical capsid protein</keyword>
<keyword id="KW-1048">Host nucleus</keyword>
<keyword id="KW-0945">Host-virus interaction</keyword>
<keyword id="KW-0687">Ribonucleoprotein</keyword>
<keyword id="KW-0694">RNA-binding</keyword>
<keyword id="KW-0543">Viral nucleoprotein</keyword>
<keyword id="KW-1163">Viral penetration into host nucleus</keyword>
<keyword id="KW-0946">Virion</keyword>
<keyword id="KW-1160">Virus entry into host cell</keyword>
<organismHost>
    <name type="scientific">Aves</name>
    <dbReference type="NCBI Taxonomy" id="8782"/>
</organismHost>
<organismHost>
    <name type="scientific">Cetacea</name>
    <name type="common">whales</name>
    <dbReference type="NCBI Taxonomy" id="9721"/>
</organismHost>
<organismHost>
    <name type="scientific">Homo sapiens</name>
    <name type="common">Human</name>
    <dbReference type="NCBI Taxonomy" id="9606"/>
</organismHost>
<organismHost>
    <name type="scientific">Phocidae</name>
    <name type="common">true seals</name>
    <dbReference type="NCBI Taxonomy" id="9709"/>
</organismHost>
<organismHost>
    <name type="scientific">Sus scrofa</name>
    <name type="common">Pig</name>
    <dbReference type="NCBI Taxonomy" id="9823"/>
</organismHost>
<organism>
    <name type="scientific">Influenza A virus (strain A/Memphis/14/1985 H3N2)</name>
    <dbReference type="NCBI Taxonomy" id="383572"/>
    <lineage>
        <taxon>Viruses</taxon>
        <taxon>Riboviria</taxon>
        <taxon>Orthornavirae</taxon>
        <taxon>Negarnaviricota</taxon>
        <taxon>Polyploviricotina</taxon>
        <taxon>Insthoviricetes</taxon>
        <taxon>Articulavirales</taxon>
        <taxon>Orthomyxoviridae</taxon>
        <taxon>Alphainfluenzavirus</taxon>
        <taxon>Alphainfluenzavirus influenzae</taxon>
        <taxon>Influenza A virus</taxon>
    </lineage>
</organism>